<evidence type="ECO:0000305" key="1"/>
<sequence length="186" mass="20884">MKKILVIVYPEMNDVEYTNVMVVFSFIKTIQTTCYHHSLKKITASNGVVEVNNIVNTINLSEFDAVYIPGGIGATKHLDKDEKLLKTINYFKVNNLYLFAICDTPNVLFKHGIITKDEIYSSFPNPNLVMSENRSTAKVTVANKLITARSAGCALEFATVIVCTFLKDNTLNELVHKRLFGSEIKD</sequence>
<organism>
    <name type="scientific">Mycoplasma genitalium (strain ATCC 33530 / DSM 19775 / NCTC 10195 / G37)</name>
    <name type="common">Mycoplasmoides genitalium</name>
    <dbReference type="NCBI Taxonomy" id="243273"/>
    <lineage>
        <taxon>Bacteria</taxon>
        <taxon>Bacillati</taxon>
        <taxon>Mycoplasmatota</taxon>
        <taxon>Mycoplasmoidales</taxon>
        <taxon>Mycoplasmoidaceae</taxon>
        <taxon>Mycoplasmoides</taxon>
    </lineage>
</organism>
<proteinExistence type="predicted"/>
<dbReference type="EMBL" id="L43967">
    <property type="protein sequence ID" value="AAC71245.1"/>
    <property type="molecule type" value="Genomic_DNA"/>
</dbReference>
<dbReference type="EMBL" id="U01773">
    <property type="protein sequence ID" value="AAD10593.1"/>
    <property type="status" value="ALT_INIT"/>
    <property type="molecule type" value="Genomic_DNA"/>
</dbReference>
<dbReference type="PIR" id="B64203">
    <property type="entry name" value="B64203"/>
</dbReference>
<dbReference type="RefSeq" id="WP_009885913.1">
    <property type="nucleotide sequence ID" value="NC_000908.2"/>
</dbReference>
<dbReference type="SMR" id="P47275"/>
<dbReference type="FunCoup" id="P47275">
    <property type="interactions" value="151"/>
</dbReference>
<dbReference type="STRING" id="243273.MG_029"/>
<dbReference type="GeneID" id="88282144"/>
<dbReference type="KEGG" id="mge:MG_029"/>
<dbReference type="eggNOG" id="COG0693">
    <property type="taxonomic scope" value="Bacteria"/>
</dbReference>
<dbReference type="HOGENOM" id="CLU_000445_44_2_14"/>
<dbReference type="InParanoid" id="P47275"/>
<dbReference type="OrthoDB" id="9800516at2"/>
<dbReference type="BioCyc" id="MGEN243273:G1GJ2-29-MONOMER"/>
<dbReference type="Proteomes" id="UP000000807">
    <property type="component" value="Chromosome"/>
</dbReference>
<dbReference type="GO" id="GO:0005737">
    <property type="term" value="C:cytoplasm"/>
    <property type="evidence" value="ECO:0000318"/>
    <property type="project" value="GO_Central"/>
</dbReference>
<dbReference type="CDD" id="cd03135">
    <property type="entry name" value="GATase1_DJ-1"/>
    <property type="match status" value="1"/>
</dbReference>
<dbReference type="Gene3D" id="3.40.50.880">
    <property type="match status" value="1"/>
</dbReference>
<dbReference type="InterPro" id="IPR029062">
    <property type="entry name" value="Class_I_gatase-like"/>
</dbReference>
<dbReference type="InterPro" id="IPR002818">
    <property type="entry name" value="DJ-1/PfpI"/>
</dbReference>
<dbReference type="InterPro" id="IPR050325">
    <property type="entry name" value="Prot/Nucl_acid_deglycase"/>
</dbReference>
<dbReference type="PANTHER" id="PTHR48094:SF12">
    <property type="entry name" value="PARKINSON DISEASE PROTEIN 7 HOMOLOG"/>
    <property type="match status" value="1"/>
</dbReference>
<dbReference type="PANTHER" id="PTHR48094">
    <property type="entry name" value="PROTEIN/NUCLEIC ACID DEGLYCASE DJ-1-RELATED"/>
    <property type="match status" value="1"/>
</dbReference>
<dbReference type="Pfam" id="PF01965">
    <property type="entry name" value="DJ-1_PfpI"/>
    <property type="match status" value="1"/>
</dbReference>
<dbReference type="SUPFAM" id="SSF52317">
    <property type="entry name" value="Class I glutamine amidotransferase-like"/>
    <property type="match status" value="1"/>
</dbReference>
<accession>P47275</accession>
<accession>Q49223</accession>
<gene>
    <name type="ordered locus">MG029</name>
</gene>
<keyword id="KW-1185">Reference proteome</keyword>
<name>Y029_MYCGE</name>
<comment type="sequence caution" evidence="1">
    <conflict type="erroneous initiation">
        <sequence resource="EMBL-CDS" id="AAD10593"/>
    </conflict>
</comment>
<protein>
    <recommendedName>
        <fullName>Uncharacterized protein MG029</fullName>
    </recommendedName>
</protein>
<feature type="chain" id="PRO_0000210393" description="Uncharacterized protein MG029">
    <location>
        <begin position="1"/>
        <end position="186"/>
    </location>
</feature>
<reference key="1">
    <citation type="journal article" date="1995" name="Science">
        <title>The minimal gene complement of Mycoplasma genitalium.</title>
        <authorList>
            <person name="Fraser C.M."/>
            <person name="Gocayne J.D."/>
            <person name="White O."/>
            <person name="Adams M.D."/>
            <person name="Clayton R.A."/>
            <person name="Fleischmann R.D."/>
            <person name="Bult C.J."/>
            <person name="Kerlavage A.R."/>
            <person name="Sutton G.G."/>
            <person name="Kelley J.M."/>
            <person name="Fritchman J.L."/>
            <person name="Weidman J.F."/>
            <person name="Small K.V."/>
            <person name="Sandusky M."/>
            <person name="Fuhrmann J.L."/>
            <person name="Nguyen D.T."/>
            <person name="Utterback T.R."/>
            <person name="Saudek D.M."/>
            <person name="Phillips C.A."/>
            <person name="Merrick J.M."/>
            <person name="Tomb J.-F."/>
            <person name="Dougherty B.A."/>
            <person name="Bott K.F."/>
            <person name="Hu P.-C."/>
            <person name="Lucier T.S."/>
            <person name="Peterson S.N."/>
            <person name="Smith H.O."/>
            <person name="Hutchison C.A. III"/>
            <person name="Venter J.C."/>
        </authorList>
    </citation>
    <scope>NUCLEOTIDE SEQUENCE [LARGE SCALE GENOMIC DNA]</scope>
    <source>
        <strain>ATCC 33530 / DSM 19775 / NCTC 10195 / G37</strain>
    </source>
</reference>
<reference key="2">
    <citation type="journal article" date="1993" name="J. Bacteriol.">
        <title>A survey of the Mycoplasma genitalium genome by using random sequencing.</title>
        <authorList>
            <person name="Peterson S.N."/>
            <person name="Hu P.-C."/>
            <person name="Bott K.F."/>
            <person name="Hutchison C.A. III"/>
        </authorList>
    </citation>
    <scope>NUCLEOTIDE SEQUENCE [GENOMIC DNA] OF 1-31</scope>
    <source>
        <strain>ATCC 33530 / DSM 19775 / NCTC 10195 / G37</strain>
    </source>
</reference>